<dbReference type="EC" id="1.17.7.3" evidence="1"/>
<dbReference type="EMBL" id="CP001063">
    <property type="protein sequence ID" value="ACD09748.1"/>
    <property type="molecule type" value="Genomic_DNA"/>
</dbReference>
<dbReference type="RefSeq" id="WP_000551824.1">
    <property type="nucleotide sequence ID" value="NC_010658.1"/>
</dbReference>
<dbReference type="SMR" id="B2TXU0"/>
<dbReference type="STRING" id="344609.SbBS512_E2890"/>
<dbReference type="KEGG" id="sbc:SbBS512_E2890"/>
<dbReference type="HOGENOM" id="CLU_042258_0_0_6"/>
<dbReference type="UniPathway" id="UPA00056">
    <property type="reaction ID" value="UER00096"/>
</dbReference>
<dbReference type="Proteomes" id="UP000001030">
    <property type="component" value="Chromosome"/>
</dbReference>
<dbReference type="GO" id="GO:0051539">
    <property type="term" value="F:4 iron, 4 sulfur cluster binding"/>
    <property type="evidence" value="ECO:0007669"/>
    <property type="project" value="UniProtKB-UniRule"/>
</dbReference>
<dbReference type="GO" id="GO:0046429">
    <property type="term" value="F:4-hydroxy-3-methylbut-2-en-1-yl diphosphate synthase activity (ferredoxin)"/>
    <property type="evidence" value="ECO:0007669"/>
    <property type="project" value="UniProtKB-UniRule"/>
</dbReference>
<dbReference type="GO" id="GO:0141197">
    <property type="term" value="F:4-hydroxy-3-methylbut-2-enyl-diphosphate synthase activity (flavodoxin)"/>
    <property type="evidence" value="ECO:0007669"/>
    <property type="project" value="UniProtKB-EC"/>
</dbReference>
<dbReference type="GO" id="GO:0005506">
    <property type="term" value="F:iron ion binding"/>
    <property type="evidence" value="ECO:0007669"/>
    <property type="project" value="InterPro"/>
</dbReference>
<dbReference type="GO" id="GO:0019288">
    <property type="term" value="P:isopentenyl diphosphate biosynthetic process, methylerythritol 4-phosphate pathway"/>
    <property type="evidence" value="ECO:0007669"/>
    <property type="project" value="UniProtKB-UniRule"/>
</dbReference>
<dbReference type="GO" id="GO:0016114">
    <property type="term" value="P:terpenoid biosynthetic process"/>
    <property type="evidence" value="ECO:0007669"/>
    <property type="project" value="InterPro"/>
</dbReference>
<dbReference type="FunFam" id="3.20.20.20:FF:000001">
    <property type="entry name" value="4-hydroxy-3-methylbut-2-en-1-yl diphosphate synthase (flavodoxin)"/>
    <property type="match status" value="1"/>
</dbReference>
<dbReference type="FunFam" id="3.30.413.10:FF:000002">
    <property type="entry name" value="4-hydroxy-3-methylbut-2-en-1-yl diphosphate synthase (flavodoxin)"/>
    <property type="match status" value="1"/>
</dbReference>
<dbReference type="Gene3D" id="3.20.20.20">
    <property type="entry name" value="Dihydropteroate synthase-like"/>
    <property type="match status" value="1"/>
</dbReference>
<dbReference type="Gene3D" id="3.30.413.10">
    <property type="entry name" value="Sulfite Reductase Hemoprotein, domain 1"/>
    <property type="match status" value="1"/>
</dbReference>
<dbReference type="HAMAP" id="MF_00159">
    <property type="entry name" value="IspG"/>
    <property type="match status" value="1"/>
</dbReference>
<dbReference type="InterPro" id="IPR011005">
    <property type="entry name" value="Dihydropteroate_synth-like_sf"/>
</dbReference>
<dbReference type="InterPro" id="IPR036849">
    <property type="entry name" value="Enolase-like_C_sf"/>
</dbReference>
<dbReference type="InterPro" id="IPR016425">
    <property type="entry name" value="IspG_bac"/>
</dbReference>
<dbReference type="InterPro" id="IPR004588">
    <property type="entry name" value="IspG_bac-typ"/>
</dbReference>
<dbReference type="InterPro" id="IPR045854">
    <property type="entry name" value="NO2/SO3_Rdtase_4Fe4S_sf"/>
</dbReference>
<dbReference type="NCBIfam" id="TIGR00612">
    <property type="entry name" value="ispG_gcpE"/>
    <property type="match status" value="1"/>
</dbReference>
<dbReference type="NCBIfam" id="NF001540">
    <property type="entry name" value="PRK00366.1"/>
    <property type="match status" value="1"/>
</dbReference>
<dbReference type="PANTHER" id="PTHR30454">
    <property type="entry name" value="4-HYDROXY-3-METHYLBUT-2-EN-1-YL DIPHOSPHATE SYNTHASE"/>
    <property type="match status" value="1"/>
</dbReference>
<dbReference type="PANTHER" id="PTHR30454:SF0">
    <property type="entry name" value="4-HYDROXY-3-METHYLBUT-2-EN-1-YL DIPHOSPHATE SYNTHASE (FERREDOXIN), CHLOROPLASTIC"/>
    <property type="match status" value="1"/>
</dbReference>
<dbReference type="Pfam" id="PF04551">
    <property type="entry name" value="GcpE"/>
    <property type="match status" value="1"/>
</dbReference>
<dbReference type="PIRSF" id="PIRSF004640">
    <property type="entry name" value="IspG"/>
    <property type="match status" value="1"/>
</dbReference>
<dbReference type="SUPFAM" id="SSF51604">
    <property type="entry name" value="Enolase C-terminal domain-like"/>
    <property type="match status" value="1"/>
</dbReference>
<dbReference type="SUPFAM" id="SSF56014">
    <property type="entry name" value="Nitrite and sulphite reductase 4Fe-4S domain-like"/>
    <property type="match status" value="1"/>
</dbReference>
<accession>B2TXU0</accession>
<evidence type="ECO:0000255" key="1">
    <source>
        <dbReference type="HAMAP-Rule" id="MF_00159"/>
    </source>
</evidence>
<comment type="function">
    <text evidence="1">Converts 2C-methyl-D-erythritol 2,4-cyclodiphosphate (ME-2,4cPP) into 1-hydroxy-2-methyl-2-(E)-butenyl 4-diphosphate.</text>
</comment>
<comment type="catalytic activity">
    <reaction evidence="1">
        <text>(2E)-4-hydroxy-3-methylbut-2-enyl diphosphate + oxidized [flavodoxin] + H2O + 2 H(+) = 2-C-methyl-D-erythritol 2,4-cyclic diphosphate + reduced [flavodoxin]</text>
        <dbReference type="Rhea" id="RHEA:43604"/>
        <dbReference type="Rhea" id="RHEA-COMP:10622"/>
        <dbReference type="Rhea" id="RHEA-COMP:10623"/>
        <dbReference type="ChEBI" id="CHEBI:15377"/>
        <dbReference type="ChEBI" id="CHEBI:15378"/>
        <dbReference type="ChEBI" id="CHEBI:57618"/>
        <dbReference type="ChEBI" id="CHEBI:58210"/>
        <dbReference type="ChEBI" id="CHEBI:58483"/>
        <dbReference type="ChEBI" id="CHEBI:128753"/>
        <dbReference type="EC" id="1.17.7.3"/>
    </reaction>
</comment>
<comment type="cofactor">
    <cofactor evidence="1">
        <name>[4Fe-4S] cluster</name>
        <dbReference type="ChEBI" id="CHEBI:49883"/>
    </cofactor>
    <text evidence="1">Binds 1 [4Fe-4S] cluster.</text>
</comment>
<comment type="pathway">
    <text evidence="1">Isoprenoid biosynthesis; isopentenyl diphosphate biosynthesis via DXP pathway; isopentenyl diphosphate from 1-deoxy-D-xylulose 5-phosphate: step 5/6.</text>
</comment>
<comment type="similarity">
    <text evidence="1">Belongs to the IspG family.</text>
</comment>
<protein>
    <recommendedName>
        <fullName evidence="1">4-hydroxy-3-methylbut-2-en-1-yl diphosphate synthase (flavodoxin)</fullName>
        <ecNumber evidence="1">1.17.7.3</ecNumber>
    </recommendedName>
    <alternativeName>
        <fullName evidence="1">1-hydroxy-2-methyl-2-(E)-butenyl 4-diphosphate synthase</fullName>
    </alternativeName>
</protein>
<keyword id="KW-0004">4Fe-4S</keyword>
<keyword id="KW-0408">Iron</keyword>
<keyword id="KW-0411">Iron-sulfur</keyword>
<keyword id="KW-0414">Isoprene biosynthesis</keyword>
<keyword id="KW-0479">Metal-binding</keyword>
<keyword id="KW-0560">Oxidoreductase</keyword>
<keyword id="KW-1185">Reference proteome</keyword>
<gene>
    <name evidence="1" type="primary">ispG</name>
    <name type="ordered locus">SbBS512_E2890</name>
</gene>
<feature type="chain" id="PRO_1000097187" description="4-hydroxy-3-methylbut-2-en-1-yl diphosphate synthase (flavodoxin)">
    <location>
        <begin position="1"/>
        <end position="372"/>
    </location>
</feature>
<feature type="binding site" evidence="1">
    <location>
        <position position="270"/>
    </location>
    <ligand>
        <name>[4Fe-4S] cluster</name>
        <dbReference type="ChEBI" id="CHEBI:49883"/>
    </ligand>
</feature>
<feature type="binding site" evidence="1">
    <location>
        <position position="273"/>
    </location>
    <ligand>
        <name>[4Fe-4S] cluster</name>
        <dbReference type="ChEBI" id="CHEBI:49883"/>
    </ligand>
</feature>
<feature type="binding site" evidence="1">
    <location>
        <position position="305"/>
    </location>
    <ligand>
        <name>[4Fe-4S] cluster</name>
        <dbReference type="ChEBI" id="CHEBI:49883"/>
    </ligand>
</feature>
<feature type="binding site" evidence="1">
    <location>
        <position position="312"/>
    </location>
    <ligand>
        <name>[4Fe-4S] cluster</name>
        <dbReference type="ChEBI" id="CHEBI:49883"/>
    </ligand>
</feature>
<reference key="1">
    <citation type="submission" date="2008-05" db="EMBL/GenBank/DDBJ databases">
        <title>Complete sequence of Shigella boydii serotype 18 strain BS512.</title>
        <authorList>
            <person name="Rasko D.A."/>
            <person name="Rosovitz M."/>
            <person name="Maurelli A.T."/>
            <person name="Myers G."/>
            <person name="Seshadri R."/>
            <person name="Cer R."/>
            <person name="Jiang L."/>
            <person name="Ravel J."/>
            <person name="Sebastian Y."/>
        </authorList>
    </citation>
    <scope>NUCLEOTIDE SEQUENCE [LARGE SCALE GENOMIC DNA]</scope>
    <source>
        <strain>CDC 3083-94 / BS512</strain>
    </source>
</reference>
<organism>
    <name type="scientific">Shigella boydii serotype 18 (strain CDC 3083-94 / BS512)</name>
    <dbReference type="NCBI Taxonomy" id="344609"/>
    <lineage>
        <taxon>Bacteria</taxon>
        <taxon>Pseudomonadati</taxon>
        <taxon>Pseudomonadota</taxon>
        <taxon>Gammaproteobacteria</taxon>
        <taxon>Enterobacterales</taxon>
        <taxon>Enterobacteriaceae</taxon>
        <taxon>Shigella</taxon>
    </lineage>
</organism>
<sequence length="372" mass="40726">MHNQAPIQRRKSTRIYVGNVPIGDGAPIAVQSMTNTRTTDVEATVNQIKALERVGADIVRVSVPTMDEAEAFKLIKQRVNVPLVADIHFDYRIALKVAEYGVDCLRINPGNIGNEERIRMVVDCARDKNIPIRIGVNAGSLEKDLQEKYGEPTPQALLESAMRHVDHLDRLNFAQFKVSVKASDVFLAVESYRLLAKQIDQPLHLGITEAGGARSGAVKSAIGLGLLLSEGIGDTLRVSLAADPVEEIKVGFDILKSLRIRSRGINFIACPTCSRQEFDVIGTVNALEQRLEDIITPMDVSIIGCVVNGPGEALVSTLGVTGGNKKSGLYEDGVRKDRLDNNDMIDQLEARIRAKASQLDEARRIDVQQVEK</sequence>
<proteinExistence type="inferred from homology"/>
<name>ISPG_SHIB3</name>